<accession>Q8NDH6</accession>
<accession>B3KRW6</accession>
<accession>Q53P45</accession>
<accession>Q53QZ4</accession>
<accession>Q53T97</accession>
<accession>Q96N47</accession>
<accession>Q96Q32</accession>
<accession>Q9BVQ2</accession>
<proteinExistence type="evidence at protein level"/>
<protein>
    <recommendedName>
        <fullName>Islet cell autoantigen 1-like protein</fullName>
    </recommendedName>
    <alternativeName>
        <fullName>Amyotrophic lateral sclerosis 2 chromosomal region candidate gene 14 protein</fullName>
    </alternativeName>
    <alternativeName>
        <fullName>Amyotrophic lateral sclerosis 2 chromosomal region candidate gene 15 protein</fullName>
    </alternativeName>
</protein>
<name>ICA1L_HUMAN</name>
<evidence type="ECO:0000255" key="1">
    <source>
        <dbReference type="PROSITE-ProRule" id="PRU00294"/>
    </source>
</evidence>
<evidence type="ECO:0000256" key="2">
    <source>
        <dbReference type="SAM" id="MobiDB-lite"/>
    </source>
</evidence>
<evidence type="ECO:0000303" key="3">
    <source>
    </source>
</evidence>
<evidence type="ECO:0000305" key="4"/>
<sequence>MDSFGQPRPEDNQSVVRRMQKKYWKTKQVFIKATGKKEDEHLVASDAELDAKLEVFHSVQETCTELLKIIEKYQLRLNVISEEENELGLFLKFQAERDATQAGKMMDATGKALCSSAKQRLALCTPLSRLKQEVATFSQRAVSDTLMTINRMEQARTEYRGALLWMKDVSQELDPDTLKQMEKFRKVQMQVRNSKASFDKLKMDVCQKVDLLGASRCNMLSHSLTTYQRTLLGFWKKTARMMSQIHEACIGFHPYDFVALKQLQDTPSKISEDNKDEQIGGFLTEQLNKLVLSDEEASFESEQANKDHNEKHSQMREFGAPQFSNSENVAKDLPVDSLEGEDFEKEFSFLNNLLSSGSSSTSEFTQECQTAFGSPSASLTSQEPSMGSEPLAHSSRFLPSQLFDLGFHVAGAFNNWVSQEESELCLSHTDNQPVPSQSPKKLTRSPNNGNQDMSAWFNLFADLDPLSNPDAIGHSDDELLNA</sequence>
<reference key="1">
    <citation type="journal article" date="2004" name="Nat. Genet.">
        <title>Complete sequencing and characterization of 21,243 full-length human cDNAs.</title>
        <authorList>
            <person name="Ota T."/>
            <person name="Suzuki Y."/>
            <person name="Nishikawa T."/>
            <person name="Otsuki T."/>
            <person name="Sugiyama T."/>
            <person name="Irie R."/>
            <person name="Wakamatsu A."/>
            <person name="Hayashi K."/>
            <person name="Sato H."/>
            <person name="Nagai K."/>
            <person name="Kimura K."/>
            <person name="Makita H."/>
            <person name="Sekine M."/>
            <person name="Obayashi M."/>
            <person name="Nishi T."/>
            <person name="Shibahara T."/>
            <person name="Tanaka T."/>
            <person name="Ishii S."/>
            <person name="Yamamoto J."/>
            <person name="Saito K."/>
            <person name="Kawai Y."/>
            <person name="Isono Y."/>
            <person name="Nakamura Y."/>
            <person name="Nagahari K."/>
            <person name="Murakami K."/>
            <person name="Yasuda T."/>
            <person name="Iwayanagi T."/>
            <person name="Wagatsuma M."/>
            <person name="Shiratori A."/>
            <person name="Sudo H."/>
            <person name="Hosoiri T."/>
            <person name="Kaku Y."/>
            <person name="Kodaira H."/>
            <person name="Kondo H."/>
            <person name="Sugawara M."/>
            <person name="Takahashi M."/>
            <person name="Kanda K."/>
            <person name="Yokoi T."/>
            <person name="Furuya T."/>
            <person name="Kikkawa E."/>
            <person name="Omura Y."/>
            <person name="Abe K."/>
            <person name="Kamihara K."/>
            <person name="Katsuta N."/>
            <person name="Sato K."/>
            <person name="Tanikawa M."/>
            <person name="Yamazaki M."/>
            <person name="Ninomiya K."/>
            <person name="Ishibashi T."/>
            <person name="Yamashita H."/>
            <person name="Murakawa K."/>
            <person name="Fujimori K."/>
            <person name="Tanai H."/>
            <person name="Kimata M."/>
            <person name="Watanabe M."/>
            <person name="Hiraoka S."/>
            <person name="Chiba Y."/>
            <person name="Ishida S."/>
            <person name="Ono Y."/>
            <person name="Takiguchi S."/>
            <person name="Watanabe S."/>
            <person name="Yosida M."/>
            <person name="Hotuta T."/>
            <person name="Kusano J."/>
            <person name="Kanehori K."/>
            <person name="Takahashi-Fujii A."/>
            <person name="Hara H."/>
            <person name="Tanase T.-O."/>
            <person name="Nomura Y."/>
            <person name="Togiya S."/>
            <person name="Komai F."/>
            <person name="Hara R."/>
            <person name="Takeuchi K."/>
            <person name="Arita M."/>
            <person name="Imose N."/>
            <person name="Musashino K."/>
            <person name="Yuuki H."/>
            <person name="Oshima A."/>
            <person name="Sasaki N."/>
            <person name="Aotsuka S."/>
            <person name="Yoshikawa Y."/>
            <person name="Matsunawa H."/>
            <person name="Ichihara T."/>
            <person name="Shiohata N."/>
            <person name="Sano S."/>
            <person name="Moriya S."/>
            <person name="Momiyama H."/>
            <person name="Satoh N."/>
            <person name="Takami S."/>
            <person name="Terashima Y."/>
            <person name="Suzuki O."/>
            <person name="Nakagawa S."/>
            <person name="Senoh A."/>
            <person name="Mizoguchi H."/>
            <person name="Goto Y."/>
            <person name="Shimizu F."/>
            <person name="Wakebe H."/>
            <person name="Hishigaki H."/>
            <person name="Watanabe T."/>
            <person name="Sugiyama A."/>
            <person name="Takemoto M."/>
            <person name="Kawakami B."/>
            <person name="Yamazaki M."/>
            <person name="Watanabe K."/>
            <person name="Kumagai A."/>
            <person name="Itakura S."/>
            <person name="Fukuzumi Y."/>
            <person name="Fujimori Y."/>
            <person name="Komiyama M."/>
            <person name="Tashiro H."/>
            <person name="Tanigami A."/>
            <person name="Fujiwara T."/>
            <person name="Ono T."/>
            <person name="Yamada K."/>
            <person name="Fujii Y."/>
            <person name="Ozaki K."/>
            <person name="Hirao M."/>
            <person name="Ohmori Y."/>
            <person name="Kawabata A."/>
            <person name="Hikiji T."/>
            <person name="Kobatake N."/>
            <person name="Inagaki H."/>
            <person name="Ikema Y."/>
            <person name="Okamoto S."/>
            <person name="Okitani R."/>
            <person name="Kawakami T."/>
            <person name="Noguchi S."/>
            <person name="Itoh T."/>
            <person name="Shigeta K."/>
            <person name="Senba T."/>
            <person name="Matsumura K."/>
            <person name="Nakajima Y."/>
            <person name="Mizuno T."/>
            <person name="Morinaga M."/>
            <person name="Sasaki M."/>
            <person name="Togashi T."/>
            <person name="Oyama M."/>
            <person name="Hata H."/>
            <person name="Watanabe M."/>
            <person name="Komatsu T."/>
            <person name="Mizushima-Sugano J."/>
            <person name="Satoh T."/>
            <person name="Shirai Y."/>
            <person name="Takahashi Y."/>
            <person name="Nakagawa K."/>
            <person name="Okumura K."/>
            <person name="Nagase T."/>
            <person name="Nomura N."/>
            <person name="Kikuchi H."/>
            <person name="Masuho Y."/>
            <person name="Yamashita R."/>
            <person name="Nakai K."/>
            <person name="Yada T."/>
            <person name="Nakamura Y."/>
            <person name="Ohara O."/>
            <person name="Isogai T."/>
            <person name="Sugano S."/>
        </authorList>
    </citation>
    <scope>NUCLEOTIDE SEQUENCE [LARGE SCALE MRNA] (ISOFORM 1)</scope>
    <source>
        <tissue>Brain</tissue>
    </source>
</reference>
<reference key="2">
    <citation type="journal article" date="2007" name="BMC Genomics">
        <title>The full-ORF clone resource of the German cDNA consortium.</title>
        <authorList>
            <person name="Bechtel S."/>
            <person name="Rosenfelder H."/>
            <person name="Duda A."/>
            <person name="Schmidt C.P."/>
            <person name="Ernst U."/>
            <person name="Wellenreuther R."/>
            <person name="Mehrle A."/>
            <person name="Schuster C."/>
            <person name="Bahr A."/>
            <person name="Bloecker H."/>
            <person name="Heubner D."/>
            <person name="Hoerlein A."/>
            <person name="Michel G."/>
            <person name="Wedler H."/>
            <person name="Koehrer K."/>
            <person name="Ottenwaelder B."/>
            <person name="Poustka A."/>
            <person name="Wiemann S."/>
            <person name="Schupp I."/>
        </authorList>
    </citation>
    <scope>NUCLEOTIDE SEQUENCE [LARGE SCALE MRNA] (ISOFORM 1)</scope>
    <source>
        <tissue>Testis</tissue>
    </source>
</reference>
<reference key="3">
    <citation type="journal article" date="2005" name="Nature">
        <title>Generation and annotation of the DNA sequences of human chromosomes 2 and 4.</title>
        <authorList>
            <person name="Hillier L.W."/>
            <person name="Graves T.A."/>
            <person name="Fulton R.S."/>
            <person name="Fulton L.A."/>
            <person name="Pepin K.H."/>
            <person name="Minx P."/>
            <person name="Wagner-McPherson C."/>
            <person name="Layman D."/>
            <person name="Wylie K."/>
            <person name="Sekhon M."/>
            <person name="Becker M.C."/>
            <person name="Fewell G.A."/>
            <person name="Delehaunty K.D."/>
            <person name="Miner T.L."/>
            <person name="Nash W.E."/>
            <person name="Kremitzki C."/>
            <person name="Oddy L."/>
            <person name="Du H."/>
            <person name="Sun H."/>
            <person name="Bradshaw-Cordum H."/>
            <person name="Ali J."/>
            <person name="Carter J."/>
            <person name="Cordes M."/>
            <person name="Harris A."/>
            <person name="Isak A."/>
            <person name="van Brunt A."/>
            <person name="Nguyen C."/>
            <person name="Du F."/>
            <person name="Courtney L."/>
            <person name="Kalicki J."/>
            <person name="Ozersky P."/>
            <person name="Abbott S."/>
            <person name="Armstrong J."/>
            <person name="Belter E.A."/>
            <person name="Caruso L."/>
            <person name="Cedroni M."/>
            <person name="Cotton M."/>
            <person name="Davidson T."/>
            <person name="Desai A."/>
            <person name="Elliott G."/>
            <person name="Erb T."/>
            <person name="Fronick C."/>
            <person name="Gaige T."/>
            <person name="Haakenson W."/>
            <person name="Haglund K."/>
            <person name="Holmes A."/>
            <person name="Harkins R."/>
            <person name="Kim K."/>
            <person name="Kruchowski S.S."/>
            <person name="Strong C.M."/>
            <person name="Grewal N."/>
            <person name="Goyea E."/>
            <person name="Hou S."/>
            <person name="Levy A."/>
            <person name="Martinka S."/>
            <person name="Mead K."/>
            <person name="McLellan M.D."/>
            <person name="Meyer R."/>
            <person name="Randall-Maher J."/>
            <person name="Tomlinson C."/>
            <person name="Dauphin-Kohlberg S."/>
            <person name="Kozlowicz-Reilly A."/>
            <person name="Shah N."/>
            <person name="Swearengen-Shahid S."/>
            <person name="Snider J."/>
            <person name="Strong J.T."/>
            <person name="Thompson J."/>
            <person name="Yoakum M."/>
            <person name="Leonard S."/>
            <person name="Pearman C."/>
            <person name="Trani L."/>
            <person name="Radionenko M."/>
            <person name="Waligorski J.E."/>
            <person name="Wang C."/>
            <person name="Rock S.M."/>
            <person name="Tin-Wollam A.-M."/>
            <person name="Maupin R."/>
            <person name="Latreille P."/>
            <person name="Wendl M.C."/>
            <person name="Yang S.-P."/>
            <person name="Pohl C."/>
            <person name="Wallis J.W."/>
            <person name="Spieth J."/>
            <person name="Bieri T.A."/>
            <person name="Berkowicz N."/>
            <person name="Nelson J.O."/>
            <person name="Osborne J."/>
            <person name="Ding L."/>
            <person name="Meyer R."/>
            <person name="Sabo A."/>
            <person name="Shotland Y."/>
            <person name="Sinha P."/>
            <person name="Wohldmann P.E."/>
            <person name="Cook L.L."/>
            <person name="Hickenbotham M.T."/>
            <person name="Eldred J."/>
            <person name="Williams D."/>
            <person name="Jones T.A."/>
            <person name="She X."/>
            <person name="Ciccarelli F.D."/>
            <person name="Izaurralde E."/>
            <person name="Taylor J."/>
            <person name="Schmutz J."/>
            <person name="Myers R.M."/>
            <person name="Cox D.R."/>
            <person name="Huang X."/>
            <person name="McPherson J.D."/>
            <person name="Mardis E.R."/>
            <person name="Clifton S.W."/>
            <person name="Warren W.C."/>
            <person name="Chinwalla A.T."/>
            <person name="Eddy S.R."/>
            <person name="Marra M.A."/>
            <person name="Ovcharenko I."/>
            <person name="Furey T.S."/>
            <person name="Miller W."/>
            <person name="Eichler E.E."/>
            <person name="Bork P."/>
            <person name="Suyama M."/>
            <person name="Torrents D."/>
            <person name="Waterston R.H."/>
            <person name="Wilson R.K."/>
        </authorList>
    </citation>
    <scope>NUCLEOTIDE SEQUENCE [LARGE SCALE GENOMIC DNA]</scope>
</reference>
<reference key="4">
    <citation type="submission" date="2005-07" db="EMBL/GenBank/DDBJ databases">
        <authorList>
            <person name="Mural R.J."/>
            <person name="Istrail S."/>
            <person name="Sutton G.G."/>
            <person name="Florea L."/>
            <person name="Halpern A.L."/>
            <person name="Mobarry C.M."/>
            <person name="Lippert R."/>
            <person name="Walenz B."/>
            <person name="Shatkay H."/>
            <person name="Dew I."/>
            <person name="Miller J.R."/>
            <person name="Flanigan M.J."/>
            <person name="Edwards N.J."/>
            <person name="Bolanos R."/>
            <person name="Fasulo D."/>
            <person name="Halldorsson B.V."/>
            <person name="Hannenhalli S."/>
            <person name="Turner R."/>
            <person name="Yooseph S."/>
            <person name="Lu F."/>
            <person name="Nusskern D.R."/>
            <person name="Shue B.C."/>
            <person name="Zheng X.H."/>
            <person name="Zhong F."/>
            <person name="Delcher A.L."/>
            <person name="Huson D.H."/>
            <person name="Kravitz S.A."/>
            <person name="Mouchard L."/>
            <person name="Reinert K."/>
            <person name="Remington K.A."/>
            <person name="Clark A.G."/>
            <person name="Waterman M.S."/>
            <person name="Eichler E.E."/>
            <person name="Adams M.D."/>
            <person name="Hunkapiller M.W."/>
            <person name="Myers E.W."/>
            <person name="Venter J.C."/>
        </authorList>
    </citation>
    <scope>NUCLEOTIDE SEQUENCE [LARGE SCALE GENOMIC DNA]</scope>
</reference>
<reference key="5">
    <citation type="journal article" date="2004" name="Genome Res.">
        <title>The status, quality, and expansion of the NIH full-length cDNA project: the Mammalian Gene Collection (MGC).</title>
        <authorList>
            <consortium name="The MGC Project Team"/>
        </authorList>
    </citation>
    <scope>NUCLEOTIDE SEQUENCE [LARGE SCALE MRNA] (ISOFORMS 1 AND 2)</scope>
    <source>
        <tissue>Placenta</tissue>
        <tissue>Testis</tissue>
    </source>
</reference>
<reference key="6">
    <citation type="journal article" date="2001" name="Nat. Genet.">
        <title>A gene encoding a putative GTPase regulator is mutated in familial amyotrophic lateral sclerosis 2.</title>
        <authorList>
            <person name="Hadano S."/>
            <person name="Hand C.K."/>
            <person name="Osuga H."/>
            <person name="Yanagisawa Y."/>
            <person name="Otomo A."/>
            <person name="Devon R.S."/>
            <person name="Miyamoto N."/>
            <person name="Showguchi-Miyata J."/>
            <person name="Okada Y."/>
            <person name="Singaraja R."/>
            <person name="Figlewicz D.A."/>
            <person name="Kwiatkowski T."/>
            <person name="Hosler B.A."/>
            <person name="Sagie T."/>
            <person name="Skaug J."/>
            <person name="Nasir J."/>
            <person name="Brown R.H. Jr."/>
            <person name="Scherer S.W."/>
            <person name="Rouleau G.A."/>
            <person name="Hayden M.R."/>
            <person name="Ikeda J.-E."/>
        </authorList>
    </citation>
    <scope>NUCLEOTIDE SEQUENCE [MRNA] OF 107-482 (ISOFORM 1)</scope>
</reference>
<organism>
    <name type="scientific">Homo sapiens</name>
    <name type="common">Human</name>
    <dbReference type="NCBI Taxonomy" id="9606"/>
    <lineage>
        <taxon>Eukaryota</taxon>
        <taxon>Metazoa</taxon>
        <taxon>Chordata</taxon>
        <taxon>Craniata</taxon>
        <taxon>Vertebrata</taxon>
        <taxon>Euteleostomi</taxon>
        <taxon>Mammalia</taxon>
        <taxon>Eutheria</taxon>
        <taxon>Euarchontoglires</taxon>
        <taxon>Primates</taxon>
        <taxon>Haplorrhini</taxon>
        <taxon>Catarrhini</taxon>
        <taxon>Hominidae</taxon>
        <taxon>Homo</taxon>
    </lineage>
</organism>
<dbReference type="EMBL" id="AK055978">
    <property type="protein sequence ID" value="BAB71062.1"/>
    <property type="molecule type" value="mRNA"/>
</dbReference>
<dbReference type="EMBL" id="AK092310">
    <property type="protein sequence ID" value="BAG52528.1"/>
    <property type="molecule type" value="mRNA"/>
</dbReference>
<dbReference type="EMBL" id="AL833904">
    <property type="protein sequence ID" value="CAD38760.1"/>
    <property type="molecule type" value="mRNA"/>
</dbReference>
<dbReference type="EMBL" id="AC010900">
    <property type="protein sequence ID" value="AAY24286.1"/>
    <property type="molecule type" value="Genomic_DNA"/>
</dbReference>
<dbReference type="EMBL" id="AC098831">
    <property type="protein sequence ID" value="AAY24091.1"/>
    <property type="molecule type" value="Genomic_DNA"/>
</dbReference>
<dbReference type="EMBL" id="AC131950">
    <property type="protein sequence ID" value="AAY15007.1"/>
    <property type="molecule type" value="Genomic_DNA"/>
</dbReference>
<dbReference type="EMBL" id="CH471063">
    <property type="protein sequence ID" value="EAW70313.1"/>
    <property type="molecule type" value="Genomic_DNA"/>
</dbReference>
<dbReference type="EMBL" id="BC000993">
    <property type="protein sequence ID" value="AAH00993.2"/>
    <property type="molecule type" value="mRNA"/>
</dbReference>
<dbReference type="EMBL" id="BC063876">
    <property type="protein sequence ID" value="AAH63876.1"/>
    <property type="molecule type" value="mRNA"/>
</dbReference>
<dbReference type="EMBL" id="AB053317">
    <property type="protein sequence ID" value="BAB69025.1"/>
    <property type="molecule type" value="mRNA"/>
</dbReference>
<dbReference type="CCDS" id="CCDS2354.1">
    <molecule id="Q8NDH6-1"/>
</dbReference>
<dbReference type="CCDS" id="CCDS74632.1">
    <molecule id="Q8NDH6-2"/>
</dbReference>
<dbReference type="RefSeq" id="NP_001275551.1">
    <molecule id="Q8NDH6-1"/>
    <property type="nucleotide sequence ID" value="NM_001288622.3"/>
</dbReference>
<dbReference type="RefSeq" id="NP_001275552.1">
    <molecule id="Q8NDH6-1"/>
    <property type="nucleotide sequence ID" value="NM_001288623.2"/>
</dbReference>
<dbReference type="RefSeq" id="NP_001275553.1">
    <molecule id="Q8NDH6-2"/>
    <property type="nucleotide sequence ID" value="NM_001288624.2"/>
</dbReference>
<dbReference type="RefSeq" id="NP_612477.3">
    <molecule id="Q8NDH6-1"/>
    <property type="nucleotide sequence ID" value="NM_138468.5"/>
</dbReference>
<dbReference type="SMR" id="Q8NDH6"/>
<dbReference type="BioGRID" id="126218">
    <property type="interactions" value="14"/>
</dbReference>
<dbReference type="FunCoup" id="Q8NDH6">
    <property type="interactions" value="824"/>
</dbReference>
<dbReference type="IntAct" id="Q8NDH6">
    <property type="interactions" value="18"/>
</dbReference>
<dbReference type="STRING" id="9606.ENSP00000478645"/>
<dbReference type="GlyGen" id="Q8NDH6">
    <property type="glycosylation" value="1 site, 1 O-linked glycan (1 site)"/>
</dbReference>
<dbReference type="iPTMnet" id="Q8NDH6"/>
<dbReference type="PhosphoSitePlus" id="Q8NDH6"/>
<dbReference type="BioMuta" id="ICA1L"/>
<dbReference type="DMDM" id="74751222"/>
<dbReference type="jPOST" id="Q8NDH6"/>
<dbReference type="MassIVE" id="Q8NDH6"/>
<dbReference type="PaxDb" id="9606-ENSP00000478645"/>
<dbReference type="PeptideAtlas" id="Q8NDH6"/>
<dbReference type="ProteomicsDB" id="73030">
    <molecule id="Q8NDH6-1"/>
</dbReference>
<dbReference type="ProteomicsDB" id="73031">
    <molecule id="Q8NDH6-2"/>
</dbReference>
<dbReference type="Pumba" id="Q8NDH6"/>
<dbReference type="Antibodypedia" id="34156">
    <property type="antibodies" value="98 antibodies from 20 providers"/>
</dbReference>
<dbReference type="DNASU" id="130026"/>
<dbReference type="Ensembl" id="ENST00000358299.7">
    <molecule id="Q8NDH6-1"/>
    <property type="protein sequence ID" value="ENSP00000351047.2"/>
    <property type="gene ID" value="ENSG00000163596.17"/>
</dbReference>
<dbReference type="Ensembl" id="ENST00000392237.6">
    <molecule id="Q8NDH6-1"/>
    <property type="protein sequence ID" value="ENSP00000376070.2"/>
    <property type="gene ID" value="ENSG00000163596.17"/>
</dbReference>
<dbReference type="Ensembl" id="ENST00000425178.5">
    <molecule id="Q8NDH6-2"/>
    <property type="protein sequence ID" value="ENSP00000404189.1"/>
    <property type="gene ID" value="ENSG00000163596.17"/>
</dbReference>
<dbReference type="Ensembl" id="ENST00000617388.4">
    <molecule id="Q8NDH6-1"/>
    <property type="protein sequence ID" value="ENSP00000478645.1"/>
    <property type="gene ID" value="ENSG00000163596.17"/>
</dbReference>
<dbReference type="GeneID" id="130026"/>
<dbReference type="KEGG" id="hsa:130026"/>
<dbReference type="MANE-Select" id="ENST00000358299.7">
    <property type="protein sequence ID" value="ENSP00000351047.2"/>
    <property type="RefSeq nucleotide sequence ID" value="NM_001288622.3"/>
    <property type="RefSeq protein sequence ID" value="NP_001275551.1"/>
</dbReference>
<dbReference type="UCSC" id="uc002uzh.3">
    <molecule id="Q8NDH6-1"/>
    <property type="organism name" value="human"/>
</dbReference>
<dbReference type="AGR" id="HGNC:14442"/>
<dbReference type="CTD" id="130026"/>
<dbReference type="DisGeNET" id="130026"/>
<dbReference type="GeneCards" id="ICA1L"/>
<dbReference type="HGNC" id="HGNC:14442">
    <property type="gene designation" value="ICA1L"/>
</dbReference>
<dbReference type="HPA" id="ENSG00000163596">
    <property type="expression patterns" value="Tissue enhanced (brain)"/>
</dbReference>
<dbReference type="MIM" id="621083">
    <property type="type" value="gene"/>
</dbReference>
<dbReference type="neXtProt" id="NX_Q8NDH6"/>
<dbReference type="OpenTargets" id="ENSG00000163596"/>
<dbReference type="PharmGKB" id="PA24738"/>
<dbReference type="VEuPathDB" id="HostDB:ENSG00000163596"/>
<dbReference type="eggNOG" id="KOG3891">
    <property type="taxonomic scope" value="Eukaryota"/>
</dbReference>
<dbReference type="GeneTree" id="ENSGT00390000005530"/>
<dbReference type="HOGENOM" id="CLU_037158_1_0_1"/>
<dbReference type="InParanoid" id="Q8NDH6"/>
<dbReference type="OMA" id="IHEEFTG"/>
<dbReference type="OrthoDB" id="2126778at2759"/>
<dbReference type="PAN-GO" id="Q8NDH6">
    <property type="GO annotations" value="2 GO annotations based on evolutionary models"/>
</dbReference>
<dbReference type="PhylomeDB" id="Q8NDH6"/>
<dbReference type="TreeFam" id="TF317186"/>
<dbReference type="PathwayCommons" id="Q8NDH6"/>
<dbReference type="SignaLink" id="Q8NDH6"/>
<dbReference type="BioGRID-ORCS" id="130026">
    <property type="hits" value="13 hits in 1159 CRISPR screens"/>
</dbReference>
<dbReference type="ChiTaRS" id="ICA1L">
    <property type="organism name" value="human"/>
</dbReference>
<dbReference type="GenomeRNAi" id="130026"/>
<dbReference type="Pharos" id="Q8NDH6">
    <property type="development level" value="Tdark"/>
</dbReference>
<dbReference type="PRO" id="PR:Q8NDH6"/>
<dbReference type="Proteomes" id="UP000005640">
    <property type="component" value="Chromosome 2"/>
</dbReference>
<dbReference type="RNAct" id="Q8NDH6">
    <property type="molecule type" value="protein"/>
</dbReference>
<dbReference type="Bgee" id="ENSG00000163596">
    <property type="expression patterns" value="Expressed in bronchial epithelial cell and 183 other cell types or tissues"/>
</dbReference>
<dbReference type="ExpressionAtlas" id="Q8NDH6">
    <property type="expression patterns" value="baseline and differential"/>
</dbReference>
<dbReference type="GO" id="GO:0001669">
    <property type="term" value="C:acrosomal vesicle"/>
    <property type="evidence" value="ECO:0007669"/>
    <property type="project" value="Ensembl"/>
</dbReference>
<dbReference type="GO" id="GO:0005794">
    <property type="term" value="C:Golgi apparatus"/>
    <property type="evidence" value="ECO:0000318"/>
    <property type="project" value="GO_Central"/>
</dbReference>
<dbReference type="GO" id="GO:0019904">
    <property type="term" value="F:protein domain specific binding"/>
    <property type="evidence" value="ECO:0007669"/>
    <property type="project" value="InterPro"/>
</dbReference>
<dbReference type="GO" id="GO:0051049">
    <property type="term" value="P:regulation of transport"/>
    <property type="evidence" value="ECO:0000318"/>
    <property type="project" value="GO_Central"/>
</dbReference>
<dbReference type="GO" id="GO:0007286">
    <property type="term" value="P:spermatid development"/>
    <property type="evidence" value="ECO:0007669"/>
    <property type="project" value="Ensembl"/>
</dbReference>
<dbReference type="CDD" id="cd07661">
    <property type="entry name" value="BAR_ICA69"/>
    <property type="match status" value="1"/>
</dbReference>
<dbReference type="FunFam" id="1.20.1270.60:FF:000015">
    <property type="entry name" value="Islet cell autoantigen 1, 69kDa"/>
    <property type="match status" value="1"/>
</dbReference>
<dbReference type="Gene3D" id="1.20.1270.60">
    <property type="entry name" value="Arfaptin homology (AH) domain/BAR domain"/>
    <property type="match status" value="1"/>
</dbReference>
<dbReference type="InterPro" id="IPR027267">
    <property type="entry name" value="AH/BAR_dom_sf"/>
</dbReference>
<dbReference type="InterPro" id="IPR010504">
    <property type="entry name" value="AH_dom"/>
</dbReference>
<dbReference type="InterPro" id="IPR024114">
    <property type="entry name" value="Islet_autoAg_Ica1/Ica1-like"/>
</dbReference>
<dbReference type="InterPro" id="IPR006723">
    <property type="entry name" value="Islet_autoAg_Ica1_C"/>
</dbReference>
<dbReference type="PANTHER" id="PTHR10164">
    <property type="entry name" value="ISLET CELL AUTOANTIGEN 1"/>
    <property type="match status" value="1"/>
</dbReference>
<dbReference type="PANTHER" id="PTHR10164:SF5">
    <property type="entry name" value="ISLET CELL AUTOANTIGEN 1-LIKE PROTEIN"/>
    <property type="match status" value="1"/>
</dbReference>
<dbReference type="Pfam" id="PF06456">
    <property type="entry name" value="Arfaptin"/>
    <property type="match status" value="1"/>
</dbReference>
<dbReference type="Pfam" id="PF04629">
    <property type="entry name" value="ICA69"/>
    <property type="match status" value="1"/>
</dbReference>
<dbReference type="SMART" id="SM01015">
    <property type="entry name" value="Arfaptin"/>
    <property type="match status" value="1"/>
</dbReference>
<dbReference type="SMART" id="SM01237">
    <property type="entry name" value="ICA69"/>
    <property type="match status" value="1"/>
</dbReference>
<dbReference type="SUPFAM" id="SSF103657">
    <property type="entry name" value="BAR/IMD domain-like"/>
    <property type="match status" value="1"/>
</dbReference>
<dbReference type="PROSITE" id="PS50870">
    <property type="entry name" value="AH"/>
    <property type="match status" value="1"/>
</dbReference>
<feature type="chain" id="PRO_0000076175" description="Islet cell autoantigen 1-like protein">
    <location>
        <begin position="1"/>
        <end position="482"/>
    </location>
</feature>
<feature type="domain" description="AH" evidence="1">
    <location>
        <begin position="44"/>
        <end position="247"/>
    </location>
</feature>
<feature type="region of interest" description="Disordered" evidence="2">
    <location>
        <begin position="365"/>
        <end position="393"/>
    </location>
</feature>
<feature type="region of interest" description="Disordered" evidence="2">
    <location>
        <begin position="427"/>
        <end position="449"/>
    </location>
</feature>
<feature type="compositionally biased region" description="Polar residues" evidence="2">
    <location>
        <begin position="366"/>
        <end position="385"/>
    </location>
</feature>
<feature type="compositionally biased region" description="Polar residues" evidence="2">
    <location>
        <begin position="428"/>
        <end position="449"/>
    </location>
</feature>
<feature type="splice variant" id="VSP_017107" description="In isoform 2." evidence="3">
    <location>
        <begin position="188"/>
        <end position="482"/>
    </location>
</feature>
<feature type="sequence conflict" description="In Ref. 1; BAB71062." evidence="4" ref="1">
    <original>M</original>
    <variation>V</variation>
    <location>
        <position position="242"/>
    </location>
</feature>
<feature type="sequence conflict" description="In Ref. 6; BAB69025." evidence="4" ref="6">
    <original>D</original>
    <variation>N</variation>
    <location>
        <position position="294"/>
    </location>
</feature>
<feature type="sequence conflict" description="In Ref. 6; BAB69025." evidence="4" ref="6">
    <original>P</original>
    <variation>S</variation>
    <location>
        <position position="334"/>
    </location>
</feature>
<keyword id="KW-0025">Alternative splicing</keyword>
<keyword id="KW-1267">Proteomics identification</keyword>
<keyword id="KW-1185">Reference proteome</keyword>
<comment type="interaction">
    <interactant intactId="EBI-10269733">
        <id>Q8NDH6</id>
    </interactant>
    <interactant intactId="EBI-2125614">
        <id>Q9BVG8</id>
        <label>KIFC3</label>
    </interactant>
    <organismsDiffer>false</organismsDiffer>
    <experiments>3</experiments>
</comment>
<comment type="interaction">
    <interactant intactId="EBI-12141931">
        <id>Q8NDH6-2</id>
    </interactant>
    <interactant intactId="EBI-744973">
        <id>Q9C005</id>
        <label>DPY30</label>
    </interactant>
    <organismsDiffer>false</organismsDiffer>
    <experiments>3</experiments>
</comment>
<comment type="interaction">
    <interactant intactId="EBI-12141931">
        <id>Q8NDH6-2</id>
    </interactant>
    <interactant intactId="EBI-348399">
        <id>P22607</id>
        <label>FGFR3</label>
    </interactant>
    <organismsDiffer>false</organismsDiffer>
    <experiments>3</experiments>
</comment>
<comment type="interaction">
    <interactant intactId="EBI-12141931">
        <id>Q8NDH6-2</id>
    </interactant>
    <interactant intactId="EBI-746252">
        <id>Q96CN9</id>
        <label>GCC1</label>
    </interactant>
    <organismsDiffer>false</organismsDiffer>
    <experiments>3</experiments>
</comment>
<comment type="interaction">
    <interactant intactId="EBI-12141931">
        <id>Q8NDH6-2</id>
    </interactant>
    <interactant intactId="EBI-744302">
        <id>P14136</id>
        <label>GFAP</label>
    </interactant>
    <organismsDiffer>false</organismsDiffer>
    <experiments>3</experiments>
</comment>
<comment type="interaction">
    <interactant intactId="EBI-12141931">
        <id>Q8NDH6-2</id>
    </interactant>
    <interactant intactId="EBI-8285963">
        <id>Q14957</id>
        <label>GRIN2C</label>
    </interactant>
    <organismsDiffer>false</organismsDiffer>
    <experiments>3</experiments>
</comment>
<comment type="interaction">
    <interactant intactId="EBI-12141931">
        <id>Q8NDH6-2</id>
    </interactant>
    <interactant intactId="EBI-740220">
        <id>O14964</id>
        <label>HGS</label>
    </interactant>
    <organismsDiffer>false</organismsDiffer>
    <experiments>3</experiments>
</comment>
<comment type="interaction">
    <interactant intactId="EBI-12141931">
        <id>Q8NDH6-2</id>
    </interactant>
    <interactant intactId="EBI-350145">
        <id>P01112</id>
        <label>HRAS</label>
    </interactant>
    <organismsDiffer>false</organismsDiffer>
    <experiments>3</experiments>
</comment>
<comment type="interaction">
    <interactant intactId="EBI-12141931">
        <id>Q8NDH6-2</id>
    </interactant>
    <interactant intactId="EBI-1055254">
        <id>Q8WXH2</id>
        <label>JPH3</label>
    </interactant>
    <organismsDiffer>false</organismsDiffer>
    <experiments>3</experiments>
</comment>
<comment type="interaction">
    <interactant intactId="EBI-12141931">
        <id>Q8NDH6-2</id>
    </interactant>
    <interactant intactId="EBI-948266">
        <id>O14901</id>
        <label>KLF11</label>
    </interactant>
    <organismsDiffer>false</organismsDiffer>
    <experiments>3</experiments>
</comment>
<comment type="interaction">
    <interactant intactId="EBI-12141931">
        <id>Q8NDH6-2</id>
    </interactant>
    <interactant intactId="EBI-3044087">
        <id>Q7Z3Y8</id>
        <label>KRT27</label>
    </interactant>
    <organismsDiffer>false</organismsDiffer>
    <experiments>3</experiments>
</comment>
<comment type="interaction">
    <interactant intactId="EBI-12141931">
        <id>Q8NDH6-2</id>
    </interactant>
    <interactant intactId="EBI-11959475">
        <id>P25791-3</id>
        <label>LMO2</label>
    </interactant>
    <organismsDiffer>false</organismsDiffer>
    <experiments>3</experiments>
</comment>
<comment type="interaction">
    <interactant intactId="EBI-12141931">
        <id>Q8NDH6-2</id>
    </interactant>
    <interactant intactId="EBI-2811583">
        <id>Q9BVL2</id>
        <label>NUP58</label>
    </interactant>
    <organismsDiffer>false</organismsDiffer>
    <experiments>3</experiments>
</comment>
<comment type="interaction">
    <interactant intactId="EBI-12141931">
        <id>Q8NDH6-2</id>
    </interactant>
    <interactant intactId="EBI-1504830">
        <id>Q9P2K3-2</id>
        <label>RCOR3</label>
    </interactant>
    <organismsDiffer>false</organismsDiffer>
    <experiments>3</experiments>
</comment>
<comment type="interaction">
    <interactant intactId="EBI-12141931">
        <id>Q8NDH6-2</id>
    </interactant>
    <interactant intactId="EBI-1042571">
        <id>Q9Y5L0</id>
        <label>TNPO3</label>
    </interactant>
    <organismsDiffer>false</organismsDiffer>
    <experiments>3</experiments>
</comment>
<comment type="interaction">
    <interactant intactId="EBI-12141931">
        <id>Q8NDH6-2</id>
    </interactant>
    <interactant intactId="EBI-25900580">
        <id>Q9Y649</id>
    </interactant>
    <organismsDiffer>false</organismsDiffer>
    <experiments>3</experiments>
</comment>
<comment type="alternative products">
    <event type="alternative splicing"/>
    <isoform>
        <id>Q8NDH6-1</id>
        <name>1</name>
        <sequence type="displayed"/>
    </isoform>
    <isoform>
        <id>Q8NDH6-2</id>
        <name>2</name>
        <sequence type="described" ref="VSP_017107"/>
    </isoform>
</comment>
<gene>
    <name type="primary">ICA1L</name>
    <name type="synonym">ALS2CR14</name>
    <name type="synonym">ALS2CR15</name>
</gene>